<comment type="function">
    <text evidence="3">Has acyl-CoA thioesterase activity towards medium and long-chain (C14 to C18) fatty acyl-CoA substrates, and probably plays a role in mitochondrial fatty acid metabolism (By similarity). Plays a role in the apoptotic process, possibly via its regulation of AKT1 activity (By similarity).</text>
</comment>
<comment type="catalytic activity">
    <reaction evidence="3">
        <text>hexadecanoyl-CoA + H2O = hexadecanoate + CoA + H(+)</text>
        <dbReference type="Rhea" id="RHEA:16645"/>
        <dbReference type="ChEBI" id="CHEBI:7896"/>
        <dbReference type="ChEBI" id="CHEBI:15377"/>
        <dbReference type="ChEBI" id="CHEBI:15378"/>
        <dbReference type="ChEBI" id="CHEBI:57287"/>
        <dbReference type="ChEBI" id="CHEBI:57379"/>
        <dbReference type="EC" id="3.1.2.2"/>
    </reaction>
    <physiologicalReaction direction="left-to-right" evidence="3">
        <dbReference type="Rhea" id="RHEA:16646"/>
    </physiologicalReaction>
</comment>
<comment type="catalytic activity">
    <reaction evidence="3">
        <text>octanoyl-CoA + H2O = octanoate + CoA + H(+)</text>
        <dbReference type="Rhea" id="RHEA:30143"/>
        <dbReference type="ChEBI" id="CHEBI:15377"/>
        <dbReference type="ChEBI" id="CHEBI:15378"/>
        <dbReference type="ChEBI" id="CHEBI:25646"/>
        <dbReference type="ChEBI" id="CHEBI:57287"/>
        <dbReference type="ChEBI" id="CHEBI:57386"/>
    </reaction>
    <physiologicalReaction direction="left-to-right" evidence="3">
        <dbReference type="Rhea" id="RHEA:30144"/>
    </physiologicalReaction>
</comment>
<comment type="catalytic activity">
    <reaction evidence="3">
        <text>decanoyl-CoA + H2O = decanoate + CoA + H(+)</text>
        <dbReference type="Rhea" id="RHEA:40059"/>
        <dbReference type="ChEBI" id="CHEBI:15377"/>
        <dbReference type="ChEBI" id="CHEBI:15378"/>
        <dbReference type="ChEBI" id="CHEBI:27689"/>
        <dbReference type="ChEBI" id="CHEBI:57287"/>
        <dbReference type="ChEBI" id="CHEBI:61430"/>
    </reaction>
    <physiologicalReaction direction="left-to-right" evidence="3">
        <dbReference type="Rhea" id="RHEA:40060"/>
    </physiologicalReaction>
</comment>
<comment type="catalytic activity">
    <reaction evidence="3">
        <text>dodecanoyl-CoA + H2O = dodecanoate + CoA + H(+)</text>
        <dbReference type="Rhea" id="RHEA:30135"/>
        <dbReference type="ChEBI" id="CHEBI:15377"/>
        <dbReference type="ChEBI" id="CHEBI:15378"/>
        <dbReference type="ChEBI" id="CHEBI:18262"/>
        <dbReference type="ChEBI" id="CHEBI:57287"/>
        <dbReference type="ChEBI" id="CHEBI:57375"/>
    </reaction>
    <physiologicalReaction direction="left-to-right" evidence="3">
        <dbReference type="Rhea" id="RHEA:30136"/>
    </physiologicalReaction>
</comment>
<comment type="catalytic activity">
    <reaction evidence="3">
        <text>tetradecanoyl-CoA + H2O = tetradecanoate + CoA + H(+)</text>
        <dbReference type="Rhea" id="RHEA:40119"/>
        <dbReference type="ChEBI" id="CHEBI:15377"/>
        <dbReference type="ChEBI" id="CHEBI:15378"/>
        <dbReference type="ChEBI" id="CHEBI:30807"/>
        <dbReference type="ChEBI" id="CHEBI:57287"/>
        <dbReference type="ChEBI" id="CHEBI:57385"/>
    </reaction>
    <physiologicalReaction direction="left-to-right" evidence="3">
        <dbReference type="Rhea" id="RHEA:40120"/>
    </physiologicalReaction>
</comment>
<comment type="catalytic activity">
    <reaction evidence="3">
        <text>(9Z)-octadecenoyl-CoA + H2O = (9Z)-octadecenoate + CoA + H(+)</text>
        <dbReference type="Rhea" id="RHEA:40139"/>
        <dbReference type="ChEBI" id="CHEBI:15377"/>
        <dbReference type="ChEBI" id="CHEBI:15378"/>
        <dbReference type="ChEBI" id="CHEBI:30823"/>
        <dbReference type="ChEBI" id="CHEBI:57287"/>
        <dbReference type="ChEBI" id="CHEBI:57387"/>
    </reaction>
    <physiologicalReaction direction="left-to-right" evidence="3">
        <dbReference type="Rhea" id="RHEA:40140"/>
    </physiologicalReaction>
</comment>
<comment type="catalytic activity">
    <reaction evidence="3">
        <text>(5Z,8Z,11Z,14Z)-eicosatetraenoyl-CoA + H2O = (5Z,8Z,11Z,14Z)-eicosatetraenoate + CoA + H(+)</text>
        <dbReference type="Rhea" id="RHEA:40151"/>
        <dbReference type="ChEBI" id="CHEBI:15377"/>
        <dbReference type="ChEBI" id="CHEBI:15378"/>
        <dbReference type="ChEBI" id="CHEBI:32395"/>
        <dbReference type="ChEBI" id="CHEBI:57287"/>
        <dbReference type="ChEBI" id="CHEBI:57368"/>
    </reaction>
    <physiologicalReaction direction="left-to-right" evidence="3">
        <dbReference type="Rhea" id="RHEA:40152"/>
    </physiologicalReaction>
</comment>
<comment type="subunit">
    <text evidence="3">Homodimer and homotetramer (By similarity). Interacts with AKT1 in the cytosol (By similarity).</text>
</comment>
<comment type="subcellular location">
    <subcellularLocation>
        <location evidence="3">Cell membrane</location>
    </subcellularLocation>
    <subcellularLocation>
        <location evidence="3">Cell projection</location>
        <location evidence="3">Ruffle membrane</location>
    </subcellularLocation>
    <subcellularLocation>
        <location evidence="3">Cytoplasm</location>
    </subcellularLocation>
    <subcellularLocation>
        <location evidence="3">Mitochondrion</location>
    </subcellularLocation>
    <subcellularLocation>
        <location evidence="3">Mitochondrion inner membrane</location>
        <topology evidence="3">Peripheral membrane protein</topology>
    </subcellularLocation>
    <subcellularLocation>
        <location evidence="3">Mitochondrion intermembrane space</location>
    </subcellularLocation>
    <text evidence="3">Released from the mitochondria into the cytosol in response to apoptotic stimuli.</text>
</comment>
<comment type="PTM">
    <text evidence="3">Phosphorylated.</text>
</comment>
<comment type="similarity">
    <text evidence="5">Belongs to the THEM4/THEM5 thioesterase family.</text>
</comment>
<keyword id="KW-0007">Acetylation</keyword>
<keyword id="KW-0053">Apoptosis</keyword>
<keyword id="KW-1003">Cell membrane</keyword>
<keyword id="KW-0966">Cell projection</keyword>
<keyword id="KW-0963">Cytoplasm</keyword>
<keyword id="KW-0276">Fatty acid metabolism</keyword>
<keyword id="KW-0378">Hydrolase</keyword>
<keyword id="KW-0443">Lipid metabolism</keyword>
<keyword id="KW-0472">Membrane</keyword>
<keyword id="KW-0496">Mitochondrion</keyword>
<keyword id="KW-0999">Mitochondrion inner membrane</keyword>
<keyword id="KW-0597">Phosphoprotein</keyword>
<keyword id="KW-1185">Reference proteome</keyword>
<keyword id="KW-0809">Transit peptide</keyword>
<proteinExistence type="evidence at transcript level"/>
<evidence type="ECO:0000250" key="1"/>
<evidence type="ECO:0000250" key="2">
    <source>
        <dbReference type="UniProtKB" id="Q3UUI3"/>
    </source>
</evidence>
<evidence type="ECO:0000250" key="3">
    <source>
        <dbReference type="UniProtKB" id="Q5T1C6"/>
    </source>
</evidence>
<evidence type="ECO:0000255" key="4"/>
<evidence type="ECO:0000305" key="5"/>
<feature type="transit peptide" description="Mitochondrion" evidence="4">
    <location>
        <begin position="1"/>
        <end position="27"/>
    </location>
</feature>
<feature type="chain" id="PRO_0000314181" description="Acyl-coenzyme A thioesterase THEM4">
    <location>
        <begin position="28"/>
        <end position="230"/>
    </location>
</feature>
<feature type="active site" description="Proton donor/acceptor" evidence="3">
    <location>
        <position position="152"/>
    </location>
</feature>
<feature type="binding site" evidence="1">
    <location>
        <position position="175"/>
    </location>
    <ligand>
        <name>substrate</name>
    </ligand>
</feature>
<feature type="binding site" evidence="1">
    <location>
        <begin position="196"/>
        <end position="197"/>
    </location>
    <ligand>
        <name>substrate</name>
    </ligand>
</feature>
<feature type="modified residue" description="Phosphoserine" evidence="3">
    <location>
        <position position="28"/>
    </location>
</feature>
<feature type="modified residue" description="Phosphoserine" evidence="3">
    <location>
        <position position="29"/>
    </location>
</feature>
<feature type="modified residue" description="N6-succinyllysine" evidence="2">
    <location>
        <position position="46"/>
    </location>
</feature>
<feature type="modified residue" description="N6-succinyllysine" evidence="2">
    <location>
        <position position="57"/>
    </location>
</feature>
<feature type="modified residue" description="N6-acetyllysine" evidence="2">
    <location>
        <position position="65"/>
    </location>
</feature>
<feature type="modified residue" description="N6-succinyllysine" evidence="2">
    <location>
        <position position="89"/>
    </location>
</feature>
<feature type="modified residue" description="N6-succinyllysine" evidence="2">
    <location>
        <position position="98"/>
    </location>
</feature>
<feature type="modified residue" description="N6-succinyllysine" evidence="2">
    <location>
        <position position="197"/>
    </location>
</feature>
<accession>Q566R0</accession>
<protein>
    <recommendedName>
        <fullName>Acyl-coenzyme A thioesterase THEM4</fullName>
        <shortName>Acyl-CoA thioesterase THEM4</shortName>
        <ecNumber evidence="3">3.1.2.2</ecNumber>
    </recommendedName>
    <alternativeName>
        <fullName>Thioesterase superfamily member 4</fullName>
    </alternativeName>
</protein>
<name>THEM4_RAT</name>
<dbReference type="EC" id="3.1.2.2" evidence="3"/>
<dbReference type="EMBL" id="BC093385">
    <property type="protein sequence ID" value="AAH93385.1"/>
    <property type="molecule type" value="mRNA"/>
</dbReference>
<dbReference type="RefSeq" id="NP_001020188.1">
    <property type="nucleotide sequence ID" value="NM_001025017.1"/>
</dbReference>
<dbReference type="SMR" id="Q566R0"/>
<dbReference type="FunCoup" id="Q566R0">
    <property type="interactions" value="240"/>
</dbReference>
<dbReference type="STRING" id="10116.ENSRNOP00000028260"/>
<dbReference type="GlyGen" id="Q566R0">
    <property type="glycosylation" value="1 site"/>
</dbReference>
<dbReference type="iPTMnet" id="Q566R0"/>
<dbReference type="PhosphoSitePlus" id="Q566R0"/>
<dbReference type="PaxDb" id="10116-ENSRNOP00000028260"/>
<dbReference type="Ensembl" id="ENSRNOT00000028260.7">
    <property type="protein sequence ID" value="ENSRNOP00000028260.5"/>
    <property type="gene ID" value="ENSRNOG00000020829.7"/>
</dbReference>
<dbReference type="GeneID" id="361992"/>
<dbReference type="KEGG" id="rno:361992"/>
<dbReference type="UCSC" id="RGD:1304723">
    <property type="organism name" value="rat"/>
</dbReference>
<dbReference type="AGR" id="RGD:1304723"/>
<dbReference type="CTD" id="117145"/>
<dbReference type="RGD" id="1304723">
    <property type="gene designation" value="Them4"/>
</dbReference>
<dbReference type="eggNOG" id="KOG4781">
    <property type="taxonomic scope" value="Eukaryota"/>
</dbReference>
<dbReference type="GeneTree" id="ENSGT00940000160047"/>
<dbReference type="HOGENOM" id="CLU_072603_0_1_1"/>
<dbReference type="InParanoid" id="Q566R0"/>
<dbReference type="OMA" id="MFYNDVE"/>
<dbReference type="OrthoDB" id="506431at2759"/>
<dbReference type="PhylomeDB" id="Q566R0"/>
<dbReference type="TreeFam" id="TF332518"/>
<dbReference type="Reactome" id="R-RNO-1257604">
    <property type="pathway name" value="PIP3 activates AKT signaling"/>
</dbReference>
<dbReference type="Reactome" id="R-RNO-165158">
    <property type="pathway name" value="Activation of AKT2"/>
</dbReference>
<dbReference type="Reactome" id="R-RNO-199418">
    <property type="pathway name" value="Negative regulation of the PI3K/AKT network"/>
</dbReference>
<dbReference type="Reactome" id="R-RNO-389357">
    <property type="pathway name" value="CD28 dependent PI3K/Akt signaling"/>
</dbReference>
<dbReference type="Reactome" id="R-RNO-5218920">
    <property type="pathway name" value="VEGFR2 mediated vascular permeability"/>
</dbReference>
<dbReference type="Reactome" id="R-RNO-77289">
    <property type="pathway name" value="Mitochondrial Fatty Acid Beta-Oxidation"/>
</dbReference>
<dbReference type="PRO" id="PR:Q566R0"/>
<dbReference type="Proteomes" id="UP000002494">
    <property type="component" value="Chromosome 2"/>
</dbReference>
<dbReference type="Bgee" id="ENSRNOG00000020829">
    <property type="expression patterns" value="Expressed in heart and 20 other cell types or tissues"/>
</dbReference>
<dbReference type="GO" id="GO:0005829">
    <property type="term" value="C:cytosol"/>
    <property type="evidence" value="ECO:0000250"/>
    <property type="project" value="UniProtKB"/>
</dbReference>
<dbReference type="GO" id="GO:0005743">
    <property type="term" value="C:mitochondrial inner membrane"/>
    <property type="evidence" value="ECO:0007669"/>
    <property type="project" value="UniProtKB-SubCell"/>
</dbReference>
<dbReference type="GO" id="GO:0005758">
    <property type="term" value="C:mitochondrial intermembrane space"/>
    <property type="evidence" value="ECO:0007669"/>
    <property type="project" value="UniProtKB-SubCell"/>
</dbReference>
<dbReference type="GO" id="GO:0005739">
    <property type="term" value="C:mitochondrion"/>
    <property type="evidence" value="ECO:0000250"/>
    <property type="project" value="UniProtKB"/>
</dbReference>
<dbReference type="GO" id="GO:0032587">
    <property type="term" value="C:ruffle membrane"/>
    <property type="evidence" value="ECO:0007669"/>
    <property type="project" value="UniProtKB-SubCell"/>
</dbReference>
<dbReference type="GO" id="GO:0052816">
    <property type="term" value="F:long-chain fatty acyl-CoA hydrolase activity"/>
    <property type="evidence" value="ECO:0000250"/>
    <property type="project" value="UniProtKB"/>
</dbReference>
<dbReference type="GO" id="GO:0006631">
    <property type="term" value="P:fatty acid metabolic process"/>
    <property type="evidence" value="ECO:0000250"/>
    <property type="project" value="UniProtKB"/>
</dbReference>
<dbReference type="GO" id="GO:0051898">
    <property type="term" value="P:negative regulation of phosphatidylinositol 3-kinase/protein kinase B signal transduction"/>
    <property type="evidence" value="ECO:0000250"/>
    <property type="project" value="UniProtKB"/>
</dbReference>
<dbReference type="GO" id="GO:1902108">
    <property type="term" value="P:regulation of mitochondrial membrane permeability involved in apoptotic process"/>
    <property type="evidence" value="ECO:0000250"/>
    <property type="project" value="UniProtKB"/>
</dbReference>
<dbReference type="CDD" id="cd03443">
    <property type="entry name" value="PaaI_thioesterase"/>
    <property type="match status" value="1"/>
</dbReference>
<dbReference type="FunFam" id="3.10.129.10:FF:000046">
    <property type="entry name" value="Acyl-coenzyme A thioesterase THEM4"/>
    <property type="match status" value="1"/>
</dbReference>
<dbReference type="Gene3D" id="3.10.129.10">
    <property type="entry name" value="Hotdog Thioesterase"/>
    <property type="match status" value="1"/>
</dbReference>
<dbReference type="InterPro" id="IPR029069">
    <property type="entry name" value="HotDog_dom_sf"/>
</dbReference>
<dbReference type="InterPro" id="IPR052365">
    <property type="entry name" value="THEM4/THEM5_acyl-CoA_thioest"/>
</dbReference>
<dbReference type="InterPro" id="IPR006683">
    <property type="entry name" value="Thioestr_dom"/>
</dbReference>
<dbReference type="PANTHER" id="PTHR12418">
    <property type="entry name" value="ACYL-COENZYME A THIOESTERASE THEM4"/>
    <property type="match status" value="1"/>
</dbReference>
<dbReference type="PANTHER" id="PTHR12418:SF19">
    <property type="entry name" value="ACYL-COENZYME A THIOESTERASE THEM4"/>
    <property type="match status" value="1"/>
</dbReference>
<dbReference type="Pfam" id="PF03061">
    <property type="entry name" value="4HBT"/>
    <property type="match status" value="1"/>
</dbReference>
<dbReference type="SUPFAM" id="SSF54637">
    <property type="entry name" value="Thioesterase/thiol ester dehydrase-isomerase"/>
    <property type="match status" value="1"/>
</dbReference>
<reference key="1">
    <citation type="journal article" date="2004" name="Genome Res.">
        <title>The status, quality, and expansion of the NIH full-length cDNA project: the Mammalian Gene Collection (MGC).</title>
        <authorList>
            <consortium name="The MGC Project Team"/>
        </authorList>
    </citation>
    <scope>NUCLEOTIDE SEQUENCE [LARGE SCALE MRNA]</scope>
    <source>
        <tissue>Thymus</tissue>
    </source>
</reference>
<gene>
    <name type="primary">Them4</name>
</gene>
<sequence>MLRSCAMRLRTLGATPARRPEATRRLFSSEEVVCKDYALPNPSWTKDLRLLFDQFMKKCEDGSWKRLPSYRQNPPQALQEFQTHFVDSKFKKEEQMSKAQQFTRSLEEGLGFEYAMFYNKAEKRIVCLFQGGLHLQGMPGFVHGGAIATIIDITAGMCAFSEGIVMTANLNIDYKKPIPLLSVVVVNSQLQKIEGRKLFVSCTIQSTDEKTLHTQATALFIKLDPDKPLT</sequence>
<organism>
    <name type="scientific">Rattus norvegicus</name>
    <name type="common">Rat</name>
    <dbReference type="NCBI Taxonomy" id="10116"/>
    <lineage>
        <taxon>Eukaryota</taxon>
        <taxon>Metazoa</taxon>
        <taxon>Chordata</taxon>
        <taxon>Craniata</taxon>
        <taxon>Vertebrata</taxon>
        <taxon>Euteleostomi</taxon>
        <taxon>Mammalia</taxon>
        <taxon>Eutheria</taxon>
        <taxon>Euarchontoglires</taxon>
        <taxon>Glires</taxon>
        <taxon>Rodentia</taxon>
        <taxon>Myomorpha</taxon>
        <taxon>Muroidea</taxon>
        <taxon>Muridae</taxon>
        <taxon>Murinae</taxon>
        <taxon>Rattus</taxon>
    </lineage>
</organism>